<protein>
    <recommendedName>
        <fullName evidence="1">Serine/threonine-protein kinase ATM</fullName>
        <ecNumber>2.7.11.1</ecNumber>
    </recommendedName>
</protein>
<name>ATM_CAEEL</name>
<sequence>MSVTQLKNLKHAIAQLLEWDGTKTARKKIVDEVVLLYHALGAEALSEDNQEIYDLYDLSARIFNLAKKEIEEANQQFEKERKKGTRRSEKPVPTPLFELSIQHLKRCCQQGIDHNQVPWIAYCLKLLEFPITITEKSIENEISNVLLLSSNASQLHWAEHAHLSSLWKWIWSRVETADIGALAMRNYMELAANLLENVDYVVFEKSPIDLMAKVMGTLKKSVEMGNPKEYWCHYRKFSVVHILSYIVHRWGLEARDFILREIFELTGSLSNLISVAHKDGEQSKKCIMRLIDDLVKLAMIETVHGHRTMNEVTRGNIQKLVKTGIQESLKSAHRNFSRSSTFSISEECVRYLTRWLLAERRLEQPSAAMNESFELTGDSSSKKKDDATFDSLIDLSFGSTISGKHKLNAWNGVMQILNELLKSRRLELQVTEKIVTILWEKRKSYTTEPLRTVFCSILSTVVCQADVRFGHRKVPTIDSILKYSLSLMPNVASLPSAAALTETIVRFRTVSREGLRNTWDTVSRTSSGSFEVVRLISALISVTEFDENSRFANDERVRSWSFRKDIIEWVLLDPNAHSHKLLYQLCQYHPTYCYESEASSSDDSLLQTLKLCKLACSPAPPSAPKALRPLEASIEEIVRYVHDKLKSILATEITLPAFVLCHEFALKYPDRSYEFNKMYKKLYQIMEDQEEDEFLQSARHFSKWPQNLTLPIQKQTINCMAVFFEANLDNQLVDLCQWSDRRKVLVEMLAELAATRSEIRDKLQKSMPFNKFVKECIMENRGDLYEMTKRFEKYSFLLSIRNLIVTRMIITNEAARLLGDGETISETDIFIIEKRTLSTCIRNVSEGKELSGYTLDPYTVAANVHNVHFDHINVEIYLELLKKSPFFAQNIVRHLLRQNGKEAEEETWHLHATVLKIVMKDEKLLAVCVATIPNMVRYLKVYQIHFSPKSNAAKFLHLDMESISHCQSYLRKPTKSSNLITAANFLTLFGCEKRTWKRPILRFWSIFKQQPAMCCEKLLIFAEECVELGLNHRIACLLRALTTSEFCRKALCDEYLKIAFQLTYRSIFLILSKNECRPEIVELCDDMNLRYDLLQHQIKHVAAHHLEHFERFETKIAFSVEKFLKSGIDGIDFEDLGLVEFYKQLNENLTEDAIRSNEARNIYIVDILSTIWLQLPSIRPQILPILARFKHISPAWTNFPQPPHISTNEKSFLQHLRFHLYLKMMNISKSMTQGEYATCIMMLLTSYDSSHFVADLIEKKQLGKLKLQQRRNVLCILSRLLKDQAVMGDEDETIIDPILFKAITKASAVFEDTAACIVPFLFKICVDFKGKYDKCVINLLGCLKGVNAEDEIVVRCLAECVDSIGLNVIARYERLNIETHSEFGVKWFFKLSRLFLKHGFTTHSFAIANILFDRLSARKRNTMMIDRTSLDRIDRSQELINLLVEIYVAEGNSVALSSLPPAVQNRPDVRQVMNKSSKEWLKLLSSNQMDSWELTIVQWMCGIQFNAITGDKYLNSILRCNFNEYTKKIDSPLKFVYFQLFHLSTSTLEIEEAISSMPLAPTIDQMRLMIIANATASFEPQSVEEHVVRAVRELRETSNRRKSGGNVKGINEKTTRMVKLAEMLTENKAYDAAINLLDTWEHECLQWTSVAAESIDIDLIRICKQHVTCRSGDPRMADINLRTMHPRVPVMSDLAIAEWSLALSKITIEYRNDMEEGIRILEFGCKHLQNKDSVETRLKVLLKLHSVCIGQLSKLEEYRETRTYRMKQQAVTAFEQQIQNSCRTSLARGNSGDEWTKKTVQRVRKEHQFEKNDLEKVDNSLNSAARKAVSSGFDALLCISQLEDDDEAIRASSLIIFPLIDVIYKYETDVGVIALLKEHTKSKLPSKLWISATSHIASKCFSIEKSQITRHLSQILCHLIYDYPYHVLHTILMYDDEKNASKVKGFLKTIFDARADQRDSSKLKEIVITIREAHQAYREIAMLDVRGNVRIQRVEINGKTMYRWPHDLKIFKCKLRQLPIPTISQKIGCPGDYSTTDLITWKRWKDVFTIADGISTPKIWEIEGSDGKWYKTVWKKDDVRQDVLVEQMFDVTNNMLEKAMLRTYNVVPLDTECGVIEFCGGTVSLKEVMCGVTREGGLHREFNSEEVSASKVSSMMRQVQTESTETRRQVFVEICQQYSPVFRHFFYTNFSTAQIWRQKIINYRQSLATWSIVCYIVGLGDRHASNILFDQKLCTFVHIDLGMILEYSKRTLPVPEQVPFRITRDVLDPILIEGIENGQLAEECTQIMEKLKENGKVILGVASALLRETMTNFREAEQAAGRPSYISEMAIGRLREKLRGTDDGVTAQSSNLQIRRLLREATSADNLSRMFCGWMPFL</sequence>
<dbReference type="EC" id="2.7.11.1"/>
<dbReference type="EMBL" id="FO081620">
    <property type="protein sequence ID" value="CDK13475.1"/>
    <property type="molecule type" value="Genomic_DNA"/>
</dbReference>
<dbReference type="EMBL" id="FO081456">
    <property type="protein sequence ID" value="CDK13475.1"/>
    <property type="status" value="JOINED"/>
    <property type="molecule type" value="Genomic_DNA"/>
</dbReference>
<dbReference type="EMBL" id="FO081488">
    <property type="protein sequence ID" value="CDK13475.1"/>
    <property type="status" value="JOINED"/>
    <property type="molecule type" value="Genomic_DNA"/>
</dbReference>
<dbReference type="EMBL" id="FO081620">
    <property type="protein sequence ID" value="CDK13476.1"/>
    <property type="molecule type" value="Genomic_DNA"/>
</dbReference>
<dbReference type="EMBL" id="FO081488">
    <property type="protein sequence ID" value="CDK13476.1"/>
    <property type="status" value="JOINED"/>
    <property type="molecule type" value="Genomic_DNA"/>
</dbReference>
<dbReference type="RefSeq" id="NP_001293214.1">
    <molecule id="Q9N3Q4-1"/>
    <property type="nucleotide sequence ID" value="NM_001306285.3"/>
</dbReference>
<dbReference type="RefSeq" id="NP_001293215.1">
    <molecule id="Q9N3Q4-2"/>
    <property type="nucleotide sequence ID" value="NM_001306286.3"/>
</dbReference>
<dbReference type="SMR" id="Q9N3Q4"/>
<dbReference type="FunCoup" id="Q9N3Q4">
    <property type="interactions" value="1013"/>
</dbReference>
<dbReference type="STRING" id="6239.Y48G1BL.2a.1"/>
<dbReference type="PaxDb" id="6239-Y48G1BL.2"/>
<dbReference type="EnsemblMetazoa" id="Y48G1BL.2a.1">
    <molecule id="Q9N3Q4-1"/>
    <property type="protein sequence ID" value="Y48G1BL.2a.1"/>
    <property type="gene ID" value="WBGene00000227"/>
</dbReference>
<dbReference type="EnsemblMetazoa" id="Y48G1BL.2b.1">
    <molecule id="Q9N3Q4-2"/>
    <property type="protein sequence ID" value="Y48G1BL.2b.1"/>
    <property type="gene ID" value="WBGene00000227"/>
</dbReference>
<dbReference type="GeneID" id="3565793"/>
<dbReference type="KEGG" id="cel:CELE_Y48G1BL.2"/>
<dbReference type="UCSC" id="Y48G1BL.2">
    <molecule id="Q9N3Q4-1"/>
    <property type="organism name" value="c. elegans"/>
</dbReference>
<dbReference type="AGR" id="WB:WBGene00000227"/>
<dbReference type="CTD" id="3565793"/>
<dbReference type="WormBase" id="Y48G1BL.2a">
    <molecule id="Q9N3Q4-1"/>
    <property type="protein sequence ID" value="CE49304"/>
    <property type="gene ID" value="WBGene00000227"/>
    <property type="gene designation" value="atm-1"/>
</dbReference>
<dbReference type="WormBase" id="Y48G1BL.2b">
    <molecule id="Q9N3Q4-2"/>
    <property type="protein sequence ID" value="CE49311"/>
    <property type="gene ID" value="WBGene00000227"/>
    <property type="gene designation" value="atm-1"/>
</dbReference>
<dbReference type="eggNOG" id="KOG0892">
    <property type="taxonomic scope" value="Eukaryota"/>
</dbReference>
<dbReference type="InParanoid" id="Q9N3Q4"/>
<dbReference type="OMA" id="ATIPNMV"/>
<dbReference type="OrthoDB" id="381190at2759"/>
<dbReference type="PRO" id="PR:Q9N3Q4"/>
<dbReference type="Proteomes" id="UP000001940">
    <property type="component" value="Chromosome I"/>
</dbReference>
<dbReference type="Bgee" id="WBGene00000227">
    <property type="expression patterns" value="Expressed in embryo and 3 other cell types or tissues"/>
</dbReference>
<dbReference type="GO" id="GO:0000785">
    <property type="term" value="C:chromatin"/>
    <property type="evidence" value="ECO:0000314"/>
    <property type="project" value="WormBase"/>
</dbReference>
<dbReference type="GO" id="GO:0005634">
    <property type="term" value="C:nucleus"/>
    <property type="evidence" value="ECO:0007669"/>
    <property type="project" value="UniProtKB-SubCell"/>
</dbReference>
<dbReference type="GO" id="GO:0005524">
    <property type="term" value="F:ATP binding"/>
    <property type="evidence" value="ECO:0007669"/>
    <property type="project" value="UniProtKB-KW"/>
</dbReference>
<dbReference type="GO" id="GO:0106310">
    <property type="term" value="F:protein serine kinase activity"/>
    <property type="evidence" value="ECO:0007669"/>
    <property type="project" value="RHEA"/>
</dbReference>
<dbReference type="GO" id="GO:0004674">
    <property type="term" value="F:protein serine/threonine kinase activity"/>
    <property type="evidence" value="ECO:0007669"/>
    <property type="project" value="UniProtKB-KW"/>
</dbReference>
<dbReference type="GO" id="GO:0006281">
    <property type="term" value="P:DNA repair"/>
    <property type="evidence" value="ECO:0007669"/>
    <property type="project" value="InterPro"/>
</dbReference>
<dbReference type="GO" id="GO:0010212">
    <property type="term" value="P:response to ionizing radiation"/>
    <property type="evidence" value="ECO:0000315"/>
    <property type="project" value="UniProtKB"/>
</dbReference>
<dbReference type="CDD" id="cd05171">
    <property type="entry name" value="PIKKc_ATM"/>
    <property type="match status" value="1"/>
</dbReference>
<dbReference type="FunFam" id="1.10.1070.11:FF:000053">
    <property type="entry name" value="Serine/threonine-protein kinase ATM"/>
    <property type="match status" value="1"/>
</dbReference>
<dbReference type="FunFam" id="3.30.1010.10:FF:000063">
    <property type="entry name" value="Serine/threonine-protein kinase ATM"/>
    <property type="match status" value="1"/>
</dbReference>
<dbReference type="Gene3D" id="1.10.1070.11">
    <property type="entry name" value="Phosphatidylinositol 3-/4-kinase, catalytic domain"/>
    <property type="match status" value="1"/>
</dbReference>
<dbReference type="Gene3D" id="3.30.1010.10">
    <property type="entry name" value="Phosphatidylinositol 3-kinase Catalytic Subunit, Chain A, domain 4"/>
    <property type="match status" value="1"/>
</dbReference>
<dbReference type="InterPro" id="IPR038980">
    <property type="entry name" value="ATM_plant"/>
</dbReference>
<dbReference type="InterPro" id="IPR003152">
    <property type="entry name" value="FATC_dom"/>
</dbReference>
<dbReference type="InterPro" id="IPR011009">
    <property type="entry name" value="Kinase-like_dom_sf"/>
</dbReference>
<dbReference type="InterPro" id="IPR000403">
    <property type="entry name" value="PI3/4_kinase_cat_dom"/>
</dbReference>
<dbReference type="InterPro" id="IPR036940">
    <property type="entry name" value="PI3/4_kinase_cat_sf"/>
</dbReference>
<dbReference type="InterPro" id="IPR018936">
    <property type="entry name" value="PI3/4_kinase_CS"/>
</dbReference>
<dbReference type="InterPro" id="IPR014009">
    <property type="entry name" value="PIK_FAT"/>
</dbReference>
<dbReference type="InterPro" id="IPR044107">
    <property type="entry name" value="PIKKc_ATM"/>
</dbReference>
<dbReference type="PANTHER" id="PTHR37079">
    <property type="entry name" value="SERINE/THREONINE-PROTEIN KINASE ATM"/>
    <property type="match status" value="1"/>
</dbReference>
<dbReference type="PANTHER" id="PTHR37079:SF4">
    <property type="entry name" value="SERINE_THREONINE-PROTEIN KINASE ATM"/>
    <property type="match status" value="1"/>
</dbReference>
<dbReference type="Pfam" id="PF02260">
    <property type="entry name" value="FATC"/>
    <property type="match status" value="1"/>
</dbReference>
<dbReference type="Pfam" id="PF00454">
    <property type="entry name" value="PI3_PI4_kinase"/>
    <property type="match status" value="1"/>
</dbReference>
<dbReference type="SMART" id="SM01343">
    <property type="entry name" value="FATC"/>
    <property type="match status" value="1"/>
</dbReference>
<dbReference type="SMART" id="SM00146">
    <property type="entry name" value="PI3Kc"/>
    <property type="match status" value="1"/>
</dbReference>
<dbReference type="SUPFAM" id="SSF56112">
    <property type="entry name" value="Protein kinase-like (PK-like)"/>
    <property type="match status" value="1"/>
</dbReference>
<dbReference type="PROSITE" id="PS51189">
    <property type="entry name" value="FAT"/>
    <property type="match status" value="1"/>
</dbReference>
<dbReference type="PROSITE" id="PS51190">
    <property type="entry name" value="FATC"/>
    <property type="match status" value="1"/>
</dbReference>
<dbReference type="PROSITE" id="PS00916">
    <property type="entry name" value="PI3_4_KINASE_2"/>
    <property type="match status" value="1"/>
</dbReference>
<dbReference type="PROSITE" id="PS50290">
    <property type="entry name" value="PI3_4_KINASE_3"/>
    <property type="match status" value="1"/>
</dbReference>
<accession>Q9N3Q4</accession>
<accession>V6CJ63</accession>
<accession>V6CKB4</accession>
<evidence type="ECO:0000250" key="1">
    <source>
        <dbReference type="UniProtKB" id="Q13315"/>
    </source>
</evidence>
<evidence type="ECO:0000255" key="2"/>
<evidence type="ECO:0000255" key="3">
    <source>
        <dbReference type="PROSITE-ProRule" id="PRU00269"/>
    </source>
</evidence>
<evidence type="ECO:0000255" key="4">
    <source>
        <dbReference type="PROSITE-ProRule" id="PRU00534"/>
    </source>
</evidence>
<evidence type="ECO:0000255" key="5">
    <source>
        <dbReference type="PROSITE-ProRule" id="PRU00535"/>
    </source>
</evidence>
<evidence type="ECO:0000269" key="6">
    <source>
    </source>
</evidence>
<evidence type="ECO:0000269" key="7">
    <source>
    </source>
</evidence>
<evidence type="ECO:0000269" key="8">
    <source>
    </source>
</evidence>
<evidence type="ECO:0000305" key="9"/>
<reference key="1">
    <citation type="journal article" date="1998" name="Science">
        <title>Genome sequence of the nematode C. elegans: a platform for investigating biology.</title>
        <authorList>
            <consortium name="The C. elegans sequencing consortium"/>
        </authorList>
    </citation>
    <scope>NUCLEOTIDE SEQUENCE [LARGE SCALE GENOMIC DNA]</scope>
    <scope>ALTERNATIVE SPLICING</scope>
    <source>
        <strain>Bristol N2</strain>
    </source>
</reference>
<reference evidence="9" key="2">
    <citation type="journal article" date="2006" name="Curr. Biol.">
        <title>Identification of conserved pathways of DNA-damage response and radiation protection by genome-wide RNAi.</title>
        <authorList>
            <person name="van Haaften G."/>
            <person name="Romeijn R."/>
            <person name="Pothof J."/>
            <person name="Koole W."/>
            <person name="Mullenders L.H."/>
            <person name="Pastink A."/>
            <person name="Plasterk R.H."/>
            <person name="Tijsterman M."/>
        </authorList>
    </citation>
    <scope>FUNCTION</scope>
</reference>
<reference evidence="9" key="3">
    <citation type="journal article" date="2007" name="Cell Death Differ.">
        <title>The nucleotide excision repair pathway is required for UV-C-induced apoptosis in Caenorhabditis elegans.</title>
        <authorList>
            <person name="Stergiou L."/>
            <person name="Doukoumetzidis K."/>
            <person name="Sendoel A."/>
            <person name="Hengartner M.O."/>
        </authorList>
    </citation>
    <scope>FUNCTION</scope>
    <scope>DISRUPTION PHENOTYPE</scope>
</reference>
<reference key="4">
    <citation type="journal article" date="2012" name="Mol. Genet. Genomics">
        <title>The atm-1 gene is required for genome stability in Caenorhabditis elegans.</title>
        <authorList>
            <person name="Jones M.R."/>
            <person name="Huang J.C."/>
            <person name="Chua S.Y."/>
            <person name="Baillie D.L."/>
            <person name="Rose A.M."/>
        </authorList>
    </citation>
    <scope>REVISION OF GENE MODEL</scope>
    <scope>FUNCTION</scope>
    <scope>DISRUPTION PHENOTYPE</scope>
</reference>
<proteinExistence type="inferred from homology"/>
<organism>
    <name type="scientific">Caenorhabditis elegans</name>
    <dbReference type="NCBI Taxonomy" id="6239"/>
    <lineage>
        <taxon>Eukaryota</taxon>
        <taxon>Metazoa</taxon>
        <taxon>Ecdysozoa</taxon>
        <taxon>Nematoda</taxon>
        <taxon>Chromadorea</taxon>
        <taxon>Rhabditida</taxon>
        <taxon>Rhabditina</taxon>
        <taxon>Rhabditomorpha</taxon>
        <taxon>Rhabditoidea</taxon>
        <taxon>Rhabditidae</taxon>
        <taxon>Peloderinae</taxon>
        <taxon>Caenorhabditis</taxon>
    </lineage>
</organism>
<gene>
    <name type="primary">atm-1</name>
    <name type="ORF">Y48G1BL.2</name>
</gene>
<comment type="function">
    <text evidence="6 7 8">Serine/threonine protein kinase which activates checkpoint signaling in the presence of DNA double strand breaks (DSBs) and other forms of DNA damage induced by ionizing radiation and other genotoxic stresses such as UV. Plays a role in maintaining genome stability.</text>
</comment>
<comment type="catalytic activity">
    <reaction evidence="1">
        <text>L-seryl-[protein] + ATP = O-phospho-L-seryl-[protein] + ADP + H(+)</text>
        <dbReference type="Rhea" id="RHEA:17989"/>
        <dbReference type="Rhea" id="RHEA-COMP:9863"/>
        <dbReference type="Rhea" id="RHEA-COMP:11604"/>
        <dbReference type="ChEBI" id="CHEBI:15378"/>
        <dbReference type="ChEBI" id="CHEBI:29999"/>
        <dbReference type="ChEBI" id="CHEBI:30616"/>
        <dbReference type="ChEBI" id="CHEBI:83421"/>
        <dbReference type="ChEBI" id="CHEBI:456216"/>
        <dbReference type="EC" id="2.7.11.1"/>
    </reaction>
</comment>
<comment type="catalytic activity">
    <reaction evidence="1">
        <text>L-threonyl-[protein] + ATP = O-phospho-L-threonyl-[protein] + ADP + H(+)</text>
        <dbReference type="Rhea" id="RHEA:46608"/>
        <dbReference type="Rhea" id="RHEA-COMP:11060"/>
        <dbReference type="Rhea" id="RHEA-COMP:11605"/>
        <dbReference type="ChEBI" id="CHEBI:15378"/>
        <dbReference type="ChEBI" id="CHEBI:30013"/>
        <dbReference type="ChEBI" id="CHEBI:30616"/>
        <dbReference type="ChEBI" id="CHEBI:61977"/>
        <dbReference type="ChEBI" id="CHEBI:456216"/>
        <dbReference type="EC" id="2.7.11.1"/>
    </reaction>
</comment>
<comment type="subcellular location">
    <subcellularLocation>
        <location evidence="1">Nucleus</location>
    </subcellularLocation>
</comment>
<comment type="alternative products">
    <event type="alternative splicing"/>
    <isoform>
        <id>Q9N3Q4-1</id>
        <name>a</name>
        <sequence type="displayed"/>
    </isoform>
    <isoform>
        <id>Q9N3Q4-2</id>
        <name>b</name>
        <sequence type="described" ref="VSP_055333"/>
    </isoform>
</comment>
<comment type="disruption phenotype">
    <text evidence="7 8">Increased sensitivity to ionizing radiation with reduced survival compared to wild-type animals. Loss of induction of apoptosis following UV-C or ionizing radiation treatment but no effect on apoptotic response induced by X-ray exposure. Low brood size, reduced viability and sterility, appearance of a high-incidence-of-males (Him) phenotype, and reduced chromosome number due to chromosome fusions.</text>
</comment>
<comment type="similarity">
    <text evidence="2">Belongs to the PI3/PI4-kinase family. ATM subfamily.</text>
</comment>
<feature type="chain" id="PRO_0000396514" description="Serine/threonine-protein kinase ATM">
    <location>
        <begin position="1"/>
        <end position="2378"/>
    </location>
</feature>
<feature type="domain" description="FAT" evidence="4">
    <location>
        <begin position="1415"/>
        <end position="1937"/>
    </location>
</feature>
<feature type="domain" description="PI3K/PI4K catalytic" evidence="3">
    <location>
        <begin position="2044"/>
        <end position="2366"/>
    </location>
</feature>
<feature type="domain" description="FATC" evidence="4 5">
    <location>
        <begin position="2346"/>
        <end position="2378"/>
    </location>
</feature>
<feature type="region of interest" description="G-loop" evidence="3">
    <location>
        <begin position="2050"/>
        <end position="2056"/>
    </location>
</feature>
<feature type="region of interest" description="Catalytic loop" evidence="3">
    <location>
        <begin position="2218"/>
        <end position="2226"/>
    </location>
</feature>
<feature type="region of interest" description="Activation loop" evidence="3">
    <location>
        <begin position="2238"/>
        <end position="2263"/>
    </location>
</feature>
<feature type="splice variant" id="VSP_055333" description="In isoform b." evidence="9">
    <location>
        <begin position="1"/>
        <end position="677"/>
    </location>
</feature>
<keyword id="KW-0025">Alternative splicing</keyword>
<keyword id="KW-0067">ATP-binding</keyword>
<keyword id="KW-0131">Cell cycle</keyword>
<keyword id="KW-0227">DNA damage</keyword>
<keyword id="KW-0418">Kinase</keyword>
<keyword id="KW-0547">Nucleotide-binding</keyword>
<keyword id="KW-0539">Nucleus</keyword>
<keyword id="KW-1185">Reference proteome</keyword>
<keyword id="KW-0723">Serine/threonine-protein kinase</keyword>
<keyword id="KW-0808">Transferase</keyword>